<feature type="chain" id="PRO_0000387305" description="Probable inorganic carbon transporter subunit DabA">
    <location>
        <begin position="1"/>
        <end position="901"/>
    </location>
</feature>
<feature type="binding site" evidence="1">
    <location>
        <position position="424"/>
    </location>
    <ligand>
        <name>Zn(2+)</name>
        <dbReference type="ChEBI" id="CHEBI:29105"/>
    </ligand>
</feature>
<feature type="binding site" evidence="1">
    <location>
        <position position="426"/>
    </location>
    <ligand>
        <name>Zn(2+)</name>
        <dbReference type="ChEBI" id="CHEBI:29105"/>
    </ligand>
</feature>
<feature type="binding site" evidence="1">
    <location>
        <position position="606"/>
    </location>
    <ligand>
        <name>Zn(2+)</name>
        <dbReference type="ChEBI" id="CHEBI:29105"/>
    </ligand>
</feature>
<feature type="binding site" evidence="1">
    <location>
        <position position="621"/>
    </location>
    <ligand>
        <name>Zn(2+)</name>
        <dbReference type="ChEBI" id="CHEBI:29105"/>
    </ligand>
</feature>
<proteinExistence type="inferred from homology"/>
<evidence type="ECO:0000255" key="1">
    <source>
        <dbReference type="HAMAP-Rule" id="MF_01871"/>
    </source>
</evidence>
<dbReference type="EMBL" id="CP000703">
    <property type="protein sequence ID" value="ABQ48279.1"/>
    <property type="molecule type" value="Genomic_DNA"/>
</dbReference>
<dbReference type="RefSeq" id="WP_000211545.1">
    <property type="nucleotide sequence ID" value="NC_009487.1"/>
</dbReference>
<dbReference type="KEGG" id="saj:SaurJH9_0475"/>
<dbReference type="HOGENOM" id="CLU_009885_0_0_9"/>
<dbReference type="GO" id="GO:0005886">
    <property type="term" value="C:plasma membrane"/>
    <property type="evidence" value="ECO:0007669"/>
    <property type="project" value="UniProtKB-SubCell"/>
</dbReference>
<dbReference type="GO" id="GO:0008270">
    <property type="term" value="F:zinc ion binding"/>
    <property type="evidence" value="ECO:0007669"/>
    <property type="project" value="UniProtKB-UniRule"/>
</dbReference>
<dbReference type="HAMAP" id="MF_01871">
    <property type="entry name" value="DabA"/>
    <property type="match status" value="1"/>
</dbReference>
<dbReference type="InterPro" id="IPR018752">
    <property type="entry name" value="DabA"/>
</dbReference>
<dbReference type="PANTHER" id="PTHR38344:SF1">
    <property type="entry name" value="INORGANIC CARBON TRANSPORTER SUBUNIT DABA-RELATED"/>
    <property type="match status" value="1"/>
</dbReference>
<dbReference type="PANTHER" id="PTHR38344">
    <property type="entry name" value="UPF0753 PROTEIN AQ_863"/>
    <property type="match status" value="1"/>
</dbReference>
<dbReference type="Pfam" id="PF10070">
    <property type="entry name" value="DabA"/>
    <property type="match status" value="1"/>
</dbReference>
<reference key="1">
    <citation type="submission" date="2007-05" db="EMBL/GenBank/DDBJ databases">
        <title>Complete sequence of chromosome of Staphylococcus aureus subsp. aureus JH9.</title>
        <authorList>
            <consortium name="US DOE Joint Genome Institute"/>
            <person name="Copeland A."/>
            <person name="Lucas S."/>
            <person name="Lapidus A."/>
            <person name="Barry K."/>
            <person name="Detter J.C."/>
            <person name="Glavina del Rio T."/>
            <person name="Hammon N."/>
            <person name="Israni S."/>
            <person name="Pitluck S."/>
            <person name="Chain P."/>
            <person name="Malfatti S."/>
            <person name="Shin M."/>
            <person name="Vergez L."/>
            <person name="Schmutz J."/>
            <person name="Larimer F."/>
            <person name="Land M."/>
            <person name="Hauser L."/>
            <person name="Kyrpides N."/>
            <person name="Kim E."/>
            <person name="Tomasz A."/>
            <person name="Richardson P."/>
        </authorList>
    </citation>
    <scope>NUCLEOTIDE SEQUENCE [LARGE SCALE GENOMIC DNA]</scope>
    <source>
        <strain>JH9</strain>
    </source>
</reference>
<accession>A5IQ06</accession>
<protein>
    <recommendedName>
        <fullName evidence="1">Probable inorganic carbon transporter subunit DabA</fullName>
    </recommendedName>
</protein>
<gene>
    <name evidence="1" type="primary">dabA</name>
    <name type="ordered locus">SaurJH9_0475</name>
</gene>
<comment type="function">
    <text evidence="1">Part of an energy-coupled inorganic carbon pump.</text>
</comment>
<comment type="cofactor">
    <cofactor evidence="1">
        <name>Zn(2+)</name>
        <dbReference type="ChEBI" id="CHEBI:29105"/>
    </cofactor>
</comment>
<comment type="subunit">
    <text evidence="1">Forms a complex with DabB.</text>
</comment>
<comment type="subcellular location">
    <subcellularLocation>
        <location evidence="1">Cell membrane</location>
        <topology evidence="1">Peripheral membrane protein</topology>
    </subcellularLocation>
</comment>
<comment type="similarity">
    <text evidence="1">Belongs to the inorganic carbon transporter (TC 9.A.2) DabA family.</text>
</comment>
<organism>
    <name type="scientific">Staphylococcus aureus (strain JH9)</name>
    <dbReference type="NCBI Taxonomy" id="359786"/>
    <lineage>
        <taxon>Bacteria</taxon>
        <taxon>Bacillati</taxon>
        <taxon>Bacillota</taxon>
        <taxon>Bacilli</taxon>
        <taxon>Bacillales</taxon>
        <taxon>Staphylococcaceae</taxon>
        <taxon>Staphylococcus</taxon>
    </lineage>
</organism>
<sequence>MTTQLNINSVIENAKRVITPLSPISIFAARNPWEGLEADTFEDVAKWLRDVRDVDIFPNKALIESAVARGELDESVFNQLVTDMLLEHHYNIPQHYINLYIDNIKTLKDVPASYMNHSNVDVVADLLLEKSKRDMAESYHHYDVRPMSDAIIDEQGEPLSEQVNRQMIKWTKLYIDQFLSSWTMPKREQSFYHAWLHLAQHDHSFTKAQRQVIKGLPNDPEMTIESVLTYFSIDQEDYQAYVEGHLLALPGWAGMLYYRSQQHHFEQHLLTDYLAIRLVVEQLLVGDEFKSVTKDCESRSENWFKQTVASLCYYSDMPSDVLLQHDVNEIQTFIHFAATMNKNVFKNLWLIAWEMTYESQLKQKIKAGHESVAGALDVNQVNVSENDNANQPHSVLLNDTQAVDENNSELNQVGTSTKAQIAFCIDVRSEPFRRHIEAAGPFETIGIAGFFGLPIQKDAVDEQFKHDSLPVMVPPAYRIKEFADRYDMNVYRQQQQTMSSMFYTFKLMKNNVMPSLLLPELSGPFLSLSTIVNSIMPRKSRASLQKIKQKWLKKPETKLTIDREFDRTSDLPVGFTEQEQIDFALQALKLMDLTEAFAPFVVLAGHASHSHNNPHHASLECGACGGASSGFNAKLLAMICNRPNVRQGLKQSGVYIPETTVFAAAEHHTSTDTLAWVYVPDTLSALALDAYESLNDAMPMISEQANRERLDKLPTIGRVNHPVEEAQRFASDWSEVRPEWGLAKNASFIIGRRQLTKGIDLEGRTFLHNYDWRKDKDGKLLNTIISGPALVAQWINLQYYASTVAPHFYGSGNKATQTVTSGVGVMQGNASDLMYGLSWQSVMAADRTMYHSPIRLLVVIQAPDYVVARLFANNEHFARKVSNHWLRLMSVNEEGRFKSWI</sequence>
<keyword id="KW-1003">Cell membrane</keyword>
<keyword id="KW-0472">Membrane</keyword>
<keyword id="KW-0479">Metal-binding</keyword>
<keyword id="KW-0813">Transport</keyword>
<keyword id="KW-0862">Zinc</keyword>
<name>DABA_STAA9</name>